<feature type="signal peptide" evidence="2">
    <location>
        <begin position="1"/>
        <end position="20"/>
    </location>
</feature>
<feature type="chain" id="PRO_0000306109" description="Protein turtle homolog A">
    <location>
        <begin position="21"/>
        <end position="1179"/>
    </location>
</feature>
<feature type="topological domain" description="Extracellular" evidence="2">
    <location>
        <begin position="21"/>
        <end position="734"/>
    </location>
</feature>
<feature type="transmembrane region" description="Helical" evidence="2">
    <location>
        <begin position="735"/>
        <end position="755"/>
    </location>
</feature>
<feature type="topological domain" description="Cytoplasmic" evidence="2">
    <location>
        <begin position="756"/>
        <end position="1179"/>
    </location>
</feature>
<feature type="domain" description="Ig-like 1">
    <location>
        <begin position="24"/>
        <end position="124"/>
    </location>
</feature>
<feature type="domain" description="Ig-like 2">
    <location>
        <begin position="136"/>
        <end position="216"/>
    </location>
</feature>
<feature type="domain" description="Ig-like 3">
    <location>
        <begin position="226"/>
        <end position="318"/>
    </location>
</feature>
<feature type="domain" description="Ig-like 4">
    <location>
        <begin position="322"/>
        <end position="410"/>
    </location>
</feature>
<feature type="domain" description="Ig-like 5">
    <location>
        <begin position="418"/>
        <end position="498"/>
    </location>
</feature>
<feature type="domain" description="Fibronectin type-III 1" evidence="4">
    <location>
        <begin position="507"/>
        <end position="611"/>
    </location>
</feature>
<feature type="domain" description="Fibronectin type-III 2" evidence="4">
    <location>
        <begin position="623"/>
        <end position="718"/>
    </location>
</feature>
<feature type="region of interest" description="Disordered" evidence="5">
    <location>
        <begin position="766"/>
        <end position="807"/>
    </location>
</feature>
<feature type="region of interest" description="Disordered" evidence="5">
    <location>
        <begin position="819"/>
        <end position="846"/>
    </location>
</feature>
<feature type="region of interest" description="Disordered" evidence="5">
    <location>
        <begin position="869"/>
        <end position="895"/>
    </location>
</feature>
<feature type="region of interest" description="Disordered" evidence="5">
    <location>
        <begin position="942"/>
        <end position="979"/>
    </location>
</feature>
<feature type="region of interest" description="Disordered" evidence="5">
    <location>
        <begin position="1016"/>
        <end position="1079"/>
    </location>
</feature>
<feature type="short sequence motif" description="PDZ-binding" evidence="1">
    <location>
        <begin position="1177"/>
        <end position="1179"/>
    </location>
</feature>
<feature type="compositionally biased region" description="Polar residues" evidence="5">
    <location>
        <begin position="884"/>
        <end position="893"/>
    </location>
</feature>
<feature type="compositionally biased region" description="Polar residues" evidence="5">
    <location>
        <begin position="1020"/>
        <end position="1029"/>
    </location>
</feature>
<feature type="modified residue" description="Phosphoserine" evidence="9">
    <location>
        <position position="809"/>
    </location>
</feature>
<feature type="glycosylation site" description="N-linked (GlcNAc...) asparagine" evidence="2">
    <location>
        <position position="188"/>
    </location>
</feature>
<feature type="glycosylation site" description="N-linked (GlcNAc...) asparagine" evidence="2">
    <location>
        <position position="513"/>
    </location>
</feature>
<feature type="glycosylation site" description="N-linked (GlcNAc...) asparagine" evidence="2">
    <location>
        <position position="524"/>
    </location>
</feature>
<feature type="disulfide bond" evidence="3">
    <location>
        <begin position="41"/>
        <end position="108"/>
    </location>
</feature>
<feature type="disulfide bond" evidence="3">
    <location>
        <begin position="158"/>
        <end position="206"/>
    </location>
</feature>
<feature type="disulfide bond" evidence="3">
    <location>
        <begin position="248"/>
        <end position="301"/>
    </location>
</feature>
<feature type="disulfide bond" evidence="3">
    <location>
        <begin position="344"/>
        <end position="395"/>
    </location>
</feature>
<feature type="disulfide bond" evidence="3">
    <location>
        <begin position="440"/>
        <end position="486"/>
    </location>
</feature>
<name>TUTLA_RAT</name>
<accession>P0C5H6</accession>
<evidence type="ECO:0000250" key="1"/>
<evidence type="ECO:0000255" key="2"/>
<evidence type="ECO:0000255" key="3">
    <source>
        <dbReference type="PROSITE-ProRule" id="PRU00114"/>
    </source>
</evidence>
<evidence type="ECO:0000255" key="4">
    <source>
        <dbReference type="PROSITE-ProRule" id="PRU00316"/>
    </source>
</evidence>
<evidence type="ECO:0000256" key="5">
    <source>
        <dbReference type="SAM" id="MobiDB-lite"/>
    </source>
</evidence>
<evidence type="ECO:0000269" key="6">
    <source>
    </source>
</evidence>
<evidence type="ECO:0000269" key="7">
    <source>
    </source>
</evidence>
<evidence type="ECO:0000305" key="8"/>
<evidence type="ECO:0007744" key="9">
    <source>
    </source>
</evidence>
<organism>
    <name type="scientific">Rattus norvegicus</name>
    <name type="common">Rat</name>
    <dbReference type="NCBI Taxonomy" id="10116"/>
    <lineage>
        <taxon>Eukaryota</taxon>
        <taxon>Metazoa</taxon>
        <taxon>Chordata</taxon>
        <taxon>Craniata</taxon>
        <taxon>Vertebrata</taxon>
        <taxon>Euteleostomi</taxon>
        <taxon>Mammalia</taxon>
        <taxon>Eutheria</taxon>
        <taxon>Euarchontoglires</taxon>
        <taxon>Glires</taxon>
        <taxon>Rodentia</taxon>
        <taxon>Myomorpha</taxon>
        <taxon>Muroidea</taxon>
        <taxon>Muridae</taxon>
        <taxon>Murinae</taxon>
        <taxon>Rattus</taxon>
    </lineage>
</organism>
<keyword id="KW-1003">Cell membrane</keyword>
<keyword id="KW-0217">Developmental protein</keyword>
<keyword id="KW-0221">Differentiation</keyword>
<keyword id="KW-1015">Disulfide bond</keyword>
<keyword id="KW-0325">Glycoprotein</keyword>
<keyword id="KW-0393">Immunoglobulin domain</keyword>
<keyword id="KW-0472">Membrane</keyword>
<keyword id="KW-0524">Neurogenesis</keyword>
<keyword id="KW-0597">Phosphoprotein</keyword>
<keyword id="KW-1185">Reference proteome</keyword>
<keyword id="KW-0677">Repeat</keyword>
<keyword id="KW-0732">Signal</keyword>
<keyword id="KW-0770">Synapse</keyword>
<keyword id="KW-0812">Transmembrane</keyword>
<keyword id="KW-1133">Transmembrane helix</keyword>
<proteinExistence type="evidence at protein level"/>
<sequence length="1179" mass="127933">MIWCLRLTILSLILSQGADGRRKPEVVSVVGRAGESAVLGCDLLPPAGRPPLHVIEWLRFGFLLPIFIQFGLYSPRIDPDYVGRVRLQTGASLQIEGLRVEDQGWYECRVLFLDQHSPEQDFANGSWVHLTVNSPPQFQETPPLVLEVKELEAVTLRCVALGSPQPYVTWKFRGQDLGKGQGQVQVRNGTLWIRRVERGSAGDYTCQASSTEGSVTHTTQLLVLGPPVIVVPPNNNTVNASQDVSLACRAEAYPANLTYSWFQDRINVFHISRLQSRVRILVDGSLWLQATQPDDAGHYTCVPSNGFPHPPSASAYLTVLYPAQVTVMPPETPLPIGMRGVIRCPVRANPPLLFVTWTKDGQALQLDKFPGWSLGPEGSLVIALGNEDALGEYSCTPYNSLGTAGSSPVTRVLLKAPPAFIDQPKEEYFQEVGRDLLIPCSARGDPPPIVSWAKVGRGLQGQAQVDSNNSLILRPLTKEAHGRWECSARNAVAHVTISTNVYVLGTSPHVVTNVSVVPLPKGANVSWEPGFDGGYLQRFSVWYTPLAKRPDRAHHDWVSLAVPMGATHLLVPGLQAYTQYQFSVLAQNKLGSGPFSEIVLSIPEGLPTTPAVPRLPPTEMPPPLSPPRGLVAVRTPRGVLLHWDPPELIPERLDGYILEGRQGSQGWEILDQGVAGTEIQLLVPGLIKDVLYEFRLVAFADSYVSDPSNIANISTSGLEVYPSRTQLPGLLPQPVLAGVVGGVCFLGVAVLVSILAACLMNRRRAARRHRKRLRQDPPLIFSPRGRSGPHSAPGSDSPDSVTKFKLQGSPVPSLRQSLLWGEPARPPSPHPDSPLGRGPLPLEPICRGPDGRFVMGPTVAPPQEKLCLERSEPRTSAKRLAQSLDCSSSSPSGVPQPLCITDISPVGQPPAAMPSPLPGPGPLLQYLSLPFFREMNVDGDWPPLEEPTPASPPDFMGSHPCPTSSFLPPPDSPPTNLRAVLPGTLMGVGVSSEPPYTALADWTLRERVLPGLLSAAPRGSLTSQSSGRGSASFLRPPSTAPSAGGSYLSPAPGDTSSWASGPERWPRREHVVTVSKRRNTSVDENYEWDSEFPGDMELLETWHPGLASSRAHPELEPELGVKTPEKSCLLNTTHAPGPEARCAALREEFLAFRRRRDATRARLPVCQQSISYPEQATLL</sequence>
<gene>
    <name type="primary">Igsf9</name>
    <name type="synonym">Dasm1</name>
    <name type="synonym">Igsf9a</name>
</gene>
<protein>
    <recommendedName>
        <fullName>Protein turtle homolog A</fullName>
    </recommendedName>
    <alternativeName>
        <fullName>Dendrite arborization and synapse maturation protein 1</fullName>
    </alternativeName>
    <alternativeName>
        <fullName>Immunoglobulin superfamily member 9A</fullName>
        <shortName>IgSF9A</shortName>
    </alternativeName>
</protein>
<reference key="1">
    <citation type="journal article" date="2004" name="Nature">
        <title>Genome sequence of the Brown Norway rat yields insights into mammalian evolution.</title>
        <authorList>
            <person name="Gibbs R.A."/>
            <person name="Weinstock G.M."/>
            <person name="Metzker M.L."/>
            <person name="Muzny D.M."/>
            <person name="Sodergren E.J."/>
            <person name="Scherer S."/>
            <person name="Scott G."/>
            <person name="Steffen D."/>
            <person name="Worley K.C."/>
            <person name="Burch P.E."/>
            <person name="Okwuonu G."/>
            <person name="Hines S."/>
            <person name="Lewis L."/>
            <person name="Deramo C."/>
            <person name="Delgado O."/>
            <person name="Dugan-Rocha S."/>
            <person name="Miner G."/>
            <person name="Morgan M."/>
            <person name="Hawes A."/>
            <person name="Gill R."/>
            <person name="Holt R.A."/>
            <person name="Adams M.D."/>
            <person name="Amanatides P.G."/>
            <person name="Baden-Tillson H."/>
            <person name="Barnstead M."/>
            <person name="Chin S."/>
            <person name="Evans C.A."/>
            <person name="Ferriera S."/>
            <person name="Fosler C."/>
            <person name="Glodek A."/>
            <person name="Gu Z."/>
            <person name="Jennings D."/>
            <person name="Kraft C.L."/>
            <person name="Nguyen T."/>
            <person name="Pfannkoch C.M."/>
            <person name="Sitter C."/>
            <person name="Sutton G.G."/>
            <person name="Venter J.C."/>
            <person name="Woodage T."/>
            <person name="Smith D."/>
            <person name="Lee H.-M."/>
            <person name="Gustafson E."/>
            <person name="Cahill P."/>
            <person name="Kana A."/>
            <person name="Doucette-Stamm L."/>
            <person name="Weinstock K."/>
            <person name="Fechtel K."/>
            <person name="Weiss R.B."/>
            <person name="Dunn D.M."/>
            <person name="Green E.D."/>
            <person name="Blakesley R.W."/>
            <person name="Bouffard G.G."/>
            <person name="De Jong P.J."/>
            <person name="Osoegawa K."/>
            <person name="Zhu B."/>
            <person name="Marra M."/>
            <person name="Schein J."/>
            <person name="Bosdet I."/>
            <person name="Fjell C."/>
            <person name="Jones S."/>
            <person name="Krzywinski M."/>
            <person name="Mathewson C."/>
            <person name="Siddiqui A."/>
            <person name="Wye N."/>
            <person name="McPherson J."/>
            <person name="Zhao S."/>
            <person name="Fraser C.M."/>
            <person name="Shetty J."/>
            <person name="Shatsman S."/>
            <person name="Geer K."/>
            <person name="Chen Y."/>
            <person name="Abramzon S."/>
            <person name="Nierman W.C."/>
            <person name="Havlak P.H."/>
            <person name="Chen R."/>
            <person name="Durbin K.J."/>
            <person name="Egan A."/>
            <person name="Ren Y."/>
            <person name="Song X.-Z."/>
            <person name="Li B."/>
            <person name="Liu Y."/>
            <person name="Qin X."/>
            <person name="Cawley S."/>
            <person name="Cooney A.J."/>
            <person name="D'Souza L.M."/>
            <person name="Martin K."/>
            <person name="Wu J.Q."/>
            <person name="Gonzalez-Garay M.L."/>
            <person name="Jackson A.R."/>
            <person name="Kalafus K.J."/>
            <person name="McLeod M.P."/>
            <person name="Milosavljevic A."/>
            <person name="Virk D."/>
            <person name="Volkov A."/>
            <person name="Wheeler D.A."/>
            <person name="Zhang Z."/>
            <person name="Bailey J.A."/>
            <person name="Eichler E.E."/>
            <person name="Tuzun E."/>
            <person name="Birney E."/>
            <person name="Mongin E."/>
            <person name="Ureta-Vidal A."/>
            <person name="Woodwark C."/>
            <person name="Zdobnov E."/>
            <person name="Bork P."/>
            <person name="Suyama M."/>
            <person name="Torrents D."/>
            <person name="Alexandersson M."/>
            <person name="Trask B.J."/>
            <person name="Young J.M."/>
            <person name="Huang H."/>
            <person name="Wang H."/>
            <person name="Xing H."/>
            <person name="Daniels S."/>
            <person name="Gietzen D."/>
            <person name="Schmidt J."/>
            <person name="Stevens K."/>
            <person name="Vitt U."/>
            <person name="Wingrove J."/>
            <person name="Camara F."/>
            <person name="Mar Alba M."/>
            <person name="Abril J.F."/>
            <person name="Guigo R."/>
            <person name="Smit A."/>
            <person name="Dubchak I."/>
            <person name="Rubin E.M."/>
            <person name="Couronne O."/>
            <person name="Poliakov A."/>
            <person name="Huebner N."/>
            <person name="Ganten D."/>
            <person name="Goesele C."/>
            <person name="Hummel O."/>
            <person name="Kreitler T."/>
            <person name="Lee Y.-A."/>
            <person name="Monti J."/>
            <person name="Schulz H."/>
            <person name="Zimdahl H."/>
            <person name="Himmelbauer H."/>
            <person name="Lehrach H."/>
            <person name="Jacob H.J."/>
            <person name="Bromberg S."/>
            <person name="Gullings-Handley J."/>
            <person name="Jensen-Seaman M.I."/>
            <person name="Kwitek A.E."/>
            <person name="Lazar J."/>
            <person name="Pasko D."/>
            <person name="Tonellato P.J."/>
            <person name="Twigger S."/>
            <person name="Ponting C.P."/>
            <person name="Duarte J.M."/>
            <person name="Rice S."/>
            <person name="Goodstadt L."/>
            <person name="Beatson S.A."/>
            <person name="Emes R.D."/>
            <person name="Winter E.E."/>
            <person name="Webber C."/>
            <person name="Brandt P."/>
            <person name="Nyakatura G."/>
            <person name="Adetobi M."/>
            <person name="Chiaromonte F."/>
            <person name="Elnitski L."/>
            <person name="Eswara P."/>
            <person name="Hardison R.C."/>
            <person name="Hou M."/>
            <person name="Kolbe D."/>
            <person name="Makova K."/>
            <person name="Miller W."/>
            <person name="Nekrutenko A."/>
            <person name="Riemer C."/>
            <person name="Schwartz S."/>
            <person name="Taylor J."/>
            <person name="Yang S."/>
            <person name="Zhang Y."/>
            <person name="Lindpaintner K."/>
            <person name="Andrews T.D."/>
            <person name="Caccamo M."/>
            <person name="Clamp M."/>
            <person name="Clarke L."/>
            <person name="Curwen V."/>
            <person name="Durbin R.M."/>
            <person name="Eyras E."/>
            <person name="Searle S.M."/>
            <person name="Cooper G.M."/>
            <person name="Batzoglou S."/>
            <person name="Brudno M."/>
            <person name="Sidow A."/>
            <person name="Stone E.A."/>
            <person name="Payseur B.A."/>
            <person name="Bourque G."/>
            <person name="Lopez-Otin C."/>
            <person name="Puente X.S."/>
            <person name="Chakrabarti K."/>
            <person name="Chatterji S."/>
            <person name="Dewey C."/>
            <person name="Pachter L."/>
            <person name="Bray N."/>
            <person name="Yap V.B."/>
            <person name="Caspi A."/>
            <person name="Tesler G."/>
            <person name="Pevzner P.A."/>
            <person name="Haussler D."/>
            <person name="Roskin K.M."/>
            <person name="Baertsch R."/>
            <person name="Clawson H."/>
            <person name="Furey T.S."/>
            <person name="Hinrichs A.S."/>
            <person name="Karolchik D."/>
            <person name="Kent W.J."/>
            <person name="Rosenbloom K.R."/>
            <person name="Trumbower H."/>
            <person name="Weirauch M."/>
            <person name="Cooper D.N."/>
            <person name="Stenson P.D."/>
            <person name="Ma B."/>
            <person name="Brent M."/>
            <person name="Arumugam M."/>
            <person name="Shteynberg D."/>
            <person name="Copley R.R."/>
            <person name="Taylor M.S."/>
            <person name="Riethman H."/>
            <person name="Mudunuri U."/>
            <person name="Peterson J."/>
            <person name="Guyer M."/>
            <person name="Felsenfeld A."/>
            <person name="Old S."/>
            <person name="Mockrin S."/>
            <person name="Collins F.S."/>
        </authorList>
    </citation>
    <scope>NUCLEOTIDE SEQUENCE [LARGE SCALE GENOMIC DNA]</scope>
    <source>
        <strain>Brown Norway</strain>
    </source>
</reference>
<reference key="2">
    <citation type="journal article" date="2004" name="Proc. Natl. Acad. Sci. U.S.A.">
        <title>Control of dendrite arborization by an Ig family member, dendrite arborization and synapse maturation 1 (Dasm1).</title>
        <authorList>
            <person name="Shi S.-H."/>
            <person name="Cox D.N."/>
            <person name="Wang D."/>
            <person name="Jan L.Y."/>
            <person name="Jan Y.-N."/>
        </authorList>
    </citation>
    <scope>FUNCTION</scope>
</reference>
<reference key="3">
    <citation type="journal article" date="2004" name="Proc. Natl. Acad. Sci. U.S.A.">
        <title>The immunoglobulin family member dendrite arborization and synapse maturation 1 (Dasm1) controls excitatory synapse maturation.</title>
        <authorList>
            <person name="Shi S.-H."/>
            <person name="Cheng T."/>
            <person name="Jan L.Y."/>
            <person name="Jan Y.-N."/>
        </authorList>
    </citation>
    <scope>FUNCTION</scope>
    <scope>SUBCELLULAR LOCATION</scope>
    <scope>TISSUE SPECIFICITY</scope>
    <scope>INTERACTION WITH SHANK1</scope>
</reference>
<reference key="4">
    <citation type="journal article" date="2012" name="Nat. Commun.">
        <title>Quantitative maps of protein phosphorylation sites across 14 different rat organs and tissues.</title>
        <authorList>
            <person name="Lundby A."/>
            <person name="Secher A."/>
            <person name="Lage K."/>
            <person name="Nordsborg N.B."/>
            <person name="Dmytriyev A."/>
            <person name="Lundby C."/>
            <person name="Olsen J.V."/>
        </authorList>
    </citation>
    <scope>PHOSPHORYLATION [LARGE SCALE ANALYSIS] AT SER-809</scope>
    <scope>IDENTIFICATION BY MASS SPECTROMETRY [LARGE SCALE ANALYSIS]</scope>
</reference>
<dbReference type="EMBL" id="AABR03085278">
    <property type="status" value="NOT_ANNOTATED_CDS"/>
    <property type="molecule type" value="Genomic_DNA"/>
</dbReference>
<dbReference type="RefSeq" id="NP_001100667.1">
    <property type="nucleotide sequence ID" value="NM_001107197.1"/>
</dbReference>
<dbReference type="RefSeq" id="XP_006250352.1">
    <property type="nucleotide sequence ID" value="XM_006250290.5"/>
</dbReference>
<dbReference type="RefSeq" id="XP_038946725.1">
    <property type="nucleotide sequence ID" value="XM_039090797.2"/>
</dbReference>
<dbReference type="RefSeq" id="XP_038946726.1">
    <property type="nucleotide sequence ID" value="XM_039090798.1"/>
</dbReference>
<dbReference type="FunCoup" id="P0C5H6">
    <property type="interactions" value="259"/>
</dbReference>
<dbReference type="STRING" id="10116.ENSRNOP00000069173"/>
<dbReference type="GlyCosmos" id="P0C5H6">
    <property type="glycosylation" value="3 sites, No reported glycans"/>
</dbReference>
<dbReference type="GlyGen" id="P0C5H6">
    <property type="glycosylation" value="5 sites"/>
</dbReference>
<dbReference type="iPTMnet" id="P0C5H6"/>
<dbReference type="PhosphoSitePlus" id="P0C5H6"/>
<dbReference type="PaxDb" id="10116-ENSRNOP00000010930"/>
<dbReference type="Ensembl" id="ENSRNOT00000010930.8">
    <property type="protein sequence ID" value="ENSRNOP00000010930.5"/>
    <property type="gene ID" value="ENSRNOG00000008054.8"/>
</dbReference>
<dbReference type="GeneID" id="304982"/>
<dbReference type="KEGG" id="rno:304982"/>
<dbReference type="UCSC" id="RGD:1304566">
    <property type="organism name" value="rat"/>
</dbReference>
<dbReference type="AGR" id="RGD:1304566"/>
<dbReference type="CTD" id="57549"/>
<dbReference type="RGD" id="1304566">
    <property type="gene designation" value="Igsf9"/>
</dbReference>
<dbReference type="eggNOG" id="KOG3510">
    <property type="taxonomic scope" value="Eukaryota"/>
</dbReference>
<dbReference type="GeneTree" id="ENSGT00940000160444"/>
<dbReference type="HOGENOM" id="CLU_008130_2_0_1"/>
<dbReference type="InParanoid" id="P0C5H6"/>
<dbReference type="OMA" id="FVMGPNV"/>
<dbReference type="OrthoDB" id="6234674at2759"/>
<dbReference type="PhylomeDB" id="P0C5H6"/>
<dbReference type="TreeFam" id="TF326128"/>
<dbReference type="PRO" id="PR:P0C5H6"/>
<dbReference type="Proteomes" id="UP000002494">
    <property type="component" value="Chromosome 13"/>
</dbReference>
<dbReference type="Bgee" id="ENSRNOG00000008054">
    <property type="expression patterns" value="Expressed in jejunum and 18 other cell types or tissues"/>
</dbReference>
<dbReference type="GO" id="GO:0030424">
    <property type="term" value="C:axon"/>
    <property type="evidence" value="ECO:0000266"/>
    <property type="project" value="RGD"/>
</dbReference>
<dbReference type="GO" id="GO:0030425">
    <property type="term" value="C:dendrite"/>
    <property type="evidence" value="ECO:0000266"/>
    <property type="project" value="RGD"/>
</dbReference>
<dbReference type="GO" id="GO:0098978">
    <property type="term" value="C:glutamatergic synapse"/>
    <property type="evidence" value="ECO:0000314"/>
    <property type="project" value="SynGO"/>
</dbReference>
<dbReference type="GO" id="GO:0060077">
    <property type="term" value="C:inhibitory synapse"/>
    <property type="evidence" value="ECO:0000266"/>
    <property type="project" value="RGD"/>
</dbReference>
<dbReference type="GO" id="GO:0043005">
    <property type="term" value="C:neuron projection"/>
    <property type="evidence" value="ECO:0000318"/>
    <property type="project" value="GO_Central"/>
</dbReference>
<dbReference type="GO" id="GO:0098839">
    <property type="term" value="C:postsynaptic density membrane"/>
    <property type="evidence" value="ECO:0000314"/>
    <property type="project" value="SynGO"/>
</dbReference>
<dbReference type="GO" id="GO:0098632">
    <property type="term" value="F:cell-cell adhesion mediator activity"/>
    <property type="evidence" value="ECO:0000266"/>
    <property type="project" value="RGD"/>
</dbReference>
<dbReference type="GO" id="GO:0016358">
    <property type="term" value="P:dendrite development"/>
    <property type="evidence" value="ECO:0000266"/>
    <property type="project" value="RGD"/>
</dbReference>
<dbReference type="GO" id="GO:0007156">
    <property type="term" value="P:homophilic cell adhesion via plasma membrane adhesion molecules"/>
    <property type="evidence" value="ECO:0000266"/>
    <property type="project" value="RGD"/>
</dbReference>
<dbReference type="GO" id="GO:0090128">
    <property type="term" value="P:regulation of synapse maturation"/>
    <property type="evidence" value="ECO:0000314"/>
    <property type="project" value="SynGO"/>
</dbReference>
<dbReference type="GO" id="GO:0050807">
    <property type="term" value="P:regulation of synapse organization"/>
    <property type="evidence" value="ECO:0000266"/>
    <property type="project" value="RGD"/>
</dbReference>
<dbReference type="CDD" id="cd00063">
    <property type="entry name" value="FN3"/>
    <property type="match status" value="2"/>
</dbReference>
<dbReference type="FunFam" id="2.60.40.10:FF:000272">
    <property type="entry name" value="Immunoglobulin superfamily member 9B"/>
    <property type="match status" value="1"/>
</dbReference>
<dbReference type="FunFam" id="2.60.40.10:FF:000323">
    <property type="entry name" value="Immunoglobulin superfamily member 9B"/>
    <property type="match status" value="1"/>
</dbReference>
<dbReference type="FunFam" id="2.60.40.10:FF:000389">
    <property type="entry name" value="Immunoglobulin superfamily member 9B"/>
    <property type="match status" value="1"/>
</dbReference>
<dbReference type="FunFam" id="2.60.40.10:FF:001243">
    <property type="entry name" value="Protein turtle homolog A"/>
    <property type="match status" value="1"/>
</dbReference>
<dbReference type="FunFam" id="2.60.40.10:FF:000226">
    <property type="entry name" value="protein turtle homolog B"/>
    <property type="match status" value="1"/>
</dbReference>
<dbReference type="FunFam" id="2.60.40.10:FF:000245">
    <property type="entry name" value="protein turtle homolog B isoform X2"/>
    <property type="match status" value="1"/>
</dbReference>
<dbReference type="FunFam" id="2.60.40.10:FF:000321">
    <property type="entry name" value="protein turtle homolog B isoform X2"/>
    <property type="match status" value="1"/>
</dbReference>
<dbReference type="Gene3D" id="2.60.40.10">
    <property type="entry name" value="Immunoglobulins"/>
    <property type="match status" value="7"/>
</dbReference>
<dbReference type="InterPro" id="IPR003961">
    <property type="entry name" value="FN3_dom"/>
</dbReference>
<dbReference type="InterPro" id="IPR036116">
    <property type="entry name" value="FN3_sf"/>
</dbReference>
<dbReference type="InterPro" id="IPR007110">
    <property type="entry name" value="Ig-like_dom"/>
</dbReference>
<dbReference type="InterPro" id="IPR036179">
    <property type="entry name" value="Ig-like_dom_sf"/>
</dbReference>
<dbReference type="InterPro" id="IPR013783">
    <property type="entry name" value="Ig-like_fold"/>
</dbReference>
<dbReference type="InterPro" id="IPR013098">
    <property type="entry name" value="Ig_I-set"/>
</dbReference>
<dbReference type="InterPro" id="IPR003599">
    <property type="entry name" value="Ig_sub"/>
</dbReference>
<dbReference type="InterPro" id="IPR003598">
    <property type="entry name" value="Ig_sub2"/>
</dbReference>
<dbReference type="InterPro" id="IPR051170">
    <property type="entry name" value="Neural/epithelial_adhesion"/>
</dbReference>
<dbReference type="PANTHER" id="PTHR12231">
    <property type="entry name" value="CTX-RELATED TYPE I TRANSMEMBRANE PROTEIN"/>
    <property type="match status" value="1"/>
</dbReference>
<dbReference type="PANTHER" id="PTHR12231:SF244">
    <property type="entry name" value="PROTEIN TURTLE HOMOLOG A"/>
    <property type="match status" value="1"/>
</dbReference>
<dbReference type="Pfam" id="PF00041">
    <property type="entry name" value="fn3"/>
    <property type="match status" value="1"/>
</dbReference>
<dbReference type="Pfam" id="PF07679">
    <property type="entry name" value="I-set"/>
    <property type="match status" value="1"/>
</dbReference>
<dbReference type="Pfam" id="PF13927">
    <property type="entry name" value="Ig_3"/>
    <property type="match status" value="2"/>
</dbReference>
<dbReference type="SMART" id="SM00060">
    <property type="entry name" value="FN3"/>
    <property type="match status" value="2"/>
</dbReference>
<dbReference type="SMART" id="SM00409">
    <property type="entry name" value="IG"/>
    <property type="match status" value="5"/>
</dbReference>
<dbReference type="SMART" id="SM00408">
    <property type="entry name" value="IGc2"/>
    <property type="match status" value="5"/>
</dbReference>
<dbReference type="SUPFAM" id="SSF49265">
    <property type="entry name" value="Fibronectin type III"/>
    <property type="match status" value="1"/>
</dbReference>
<dbReference type="SUPFAM" id="SSF48726">
    <property type="entry name" value="Immunoglobulin"/>
    <property type="match status" value="4"/>
</dbReference>
<dbReference type="PROSITE" id="PS50853">
    <property type="entry name" value="FN3"/>
    <property type="match status" value="2"/>
</dbReference>
<dbReference type="PROSITE" id="PS50835">
    <property type="entry name" value="IG_LIKE"/>
    <property type="match status" value="5"/>
</dbReference>
<comment type="function">
    <text evidence="6 7">Functions in dendrite outgrowth and synapse maturation.</text>
</comment>
<comment type="subunit">
    <text evidence="6">Interacts with SHANK1 and probably with MAGI2.</text>
</comment>
<comment type="subcellular location">
    <subcellularLocation>
        <location evidence="6">Cell membrane</location>
        <topology evidence="6">Single-pass type I membrane protein</topology>
    </subcellularLocation>
    <subcellularLocation>
        <location evidence="6">Synapse</location>
    </subcellularLocation>
    <text>Enriched at the excitatory synapses in mature neurons.</text>
</comment>
<comment type="tissue specificity">
    <text evidence="6">Expressed in hippocampal neurons (at protein level).</text>
</comment>
<comment type="domain">
    <text evidence="1">The PDZ-binding motif mediates interactions with MAGI2 and SHANK1.</text>
</comment>
<comment type="similarity">
    <text evidence="8">Belongs to the immunoglobulin superfamily. Turtle family.</text>
</comment>